<proteinExistence type="evidence at transcript level"/>
<keyword id="KW-0963">Cytoplasm</keyword>
<keyword id="KW-0378">Hydrolase</keyword>
<keyword id="KW-0539">Nucleus</keyword>
<keyword id="KW-0904">Protein phosphatase</keyword>
<keyword id="KW-1185">Reference proteome</keyword>
<organism>
    <name type="scientific">Bos taurus</name>
    <name type="common">Bovine</name>
    <dbReference type="NCBI Taxonomy" id="9913"/>
    <lineage>
        <taxon>Eukaryota</taxon>
        <taxon>Metazoa</taxon>
        <taxon>Chordata</taxon>
        <taxon>Craniata</taxon>
        <taxon>Vertebrata</taxon>
        <taxon>Euteleostomi</taxon>
        <taxon>Mammalia</taxon>
        <taxon>Eutheria</taxon>
        <taxon>Laurasiatheria</taxon>
        <taxon>Artiodactyla</taxon>
        <taxon>Ruminantia</taxon>
        <taxon>Pecora</taxon>
        <taxon>Bovidae</taxon>
        <taxon>Bovinae</taxon>
        <taxon>Bos</taxon>
    </lineage>
</organism>
<evidence type="ECO:0000250" key="1"/>
<evidence type="ECO:0000250" key="2">
    <source>
        <dbReference type="UniProtKB" id="Q9Y6W6"/>
    </source>
</evidence>
<evidence type="ECO:0000255" key="3">
    <source>
        <dbReference type="PROSITE-ProRule" id="PRU00160"/>
    </source>
</evidence>
<evidence type="ECO:0000255" key="4">
    <source>
        <dbReference type="PROSITE-ProRule" id="PRU00173"/>
    </source>
</evidence>
<evidence type="ECO:0000255" key="5">
    <source>
        <dbReference type="PROSITE-ProRule" id="PRU10044"/>
    </source>
</evidence>
<evidence type="ECO:0000305" key="6"/>
<gene>
    <name type="primary">DUSP10</name>
</gene>
<comment type="function">
    <text evidence="2">Protein phosphatase involved in the inactivation of MAP kinases. Has a specificity for the MAPK11/MAPK12/MAPK13/MAPK14 subfamily. It preferably dephosphorylates p38.</text>
</comment>
<comment type="catalytic activity">
    <reaction evidence="2 5">
        <text>O-phospho-L-tyrosyl-[protein] + H2O = L-tyrosyl-[protein] + phosphate</text>
        <dbReference type="Rhea" id="RHEA:10684"/>
        <dbReference type="Rhea" id="RHEA-COMP:10136"/>
        <dbReference type="Rhea" id="RHEA-COMP:20101"/>
        <dbReference type="ChEBI" id="CHEBI:15377"/>
        <dbReference type="ChEBI" id="CHEBI:43474"/>
        <dbReference type="ChEBI" id="CHEBI:46858"/>
        <dbReference type="ChEBI" id="CHEBI:61978"/>
        <dbReference type="EC" id="3.1.3.48"/>
    </reaction>
</comment>
<comment type="catalytic activity">
    <reaction evidence="2">
        <text>O-phospho-L-seryl-[protein] + H2O = L-seryl-[protein] + phosphate</text>
        <dbReference type="Rhea" id="RHEA:20629"/>
        <dbReference type="Rhea" id="RHEA-COMP:9863"/>
        <dbReference type="Rhea" id="RHEA-COMP:11604"/>
        <dbReference type="ChEBI" id="CHEBI:15377"/>
        <dbReference type="ChEBI" id="CHEBI:29999"/>
        <dbReference type="ChEBI" id="CHEBI:43474"/>
        <dbReference type="ChEBI" id="CHEBI:83421"/>
        <dbReference type="EC" id="3.1.3.16"/>
    </reaction>
</comment>
<comment type="catalytic activity">
    <reaction evidence="2">
        <text>O-phospho-L-threonyl-[protein] + H2O = L-threonyl-[protein] + phosphate</text>
        <dbReference type="Rhea" id="RHEA:47004"/>
        <dbReference type="Rhea" id="RHEA-COMP:11060"/>
        <dbReference type="Rhea" id="RHEA-COMP:11605"/>
        <dbReference type="ChEBI" id="CHEBI:15377"/>
        <dbReference type="ChEBI" id="CHEBI:30013"/>
        <dbReference type="ChEBI" id="CHEBI:43474"/>
        <dbReference type="ChEBI" id="CHEBI:61977"/>
        <dbReference type="EC" id="3.1.3.16"/>
    </reaction>
</comment>
<comment type="subunit">
    <text evidence="2">Monomer. Interacts with MAPK14.</text>
</comment>
<comment type="subcellular location">
    <subcellularLocation>
        <location evidence="2">Cytoplasm</location>
    </subcellularLocation>
    <subcellularLocation>
        <location evidence="2">Nucleus</location>
    </subcellularLocation>
</comment>
<comment type="similarity">
    <text evidence="6">Belongs to the protein-tyrosine phosphatase family. Non-receptor class dual specificity subfamily.</text>
</comment>
<protein>
    <recommendedName>
        <fullName>Dual specificity protein phosphatase 10</fullName>
        <ecNumber evidence="2">3.1.3.16</ecNumber>
        <ecNumber evidence="2">3.1.3.48</ecNumber>
    </recommendedName>
</protein>
<dbReference type="EC" id="3.1.3.16" evidence="2"/>
<dbReference type="EC" id="3.1.3.48" evidence="2"/>
<dbReference type="EMBL" id="BC122694">
    <property type="protein sequence ID" value="AAI22695.1"/>
    <property type="molecule type" value="mRNA"/>
</dbReference>
<dbReference type="RefSeq" id="NP_001029897.2">
    <property type="nucleotide sequence ID" value="NM_001034725.2"/>
</dbReference>
<dbReference type="RefSeq" id="XP_005216894.1">
    <property type="nucleotide sequence ID" value="XM_005216837.3"/>
</dbReference>
<dbReference type="RefSeq" id="XP_059731467.1">
    <property type="nucleotide sequence ID" value="XM_059875484.1"/>
</dbReference>
<dbReference type="SMR" id="Q0IID7"/>
<dbReference type="FunCoup" id="Q0IID7">
    <property type="interactions" value="377"/>
</dbReference>
<dbReference type="STRING" id="9913.ENSBTAP00000002265"/>
<dbReference type="PaxDb" id="9913-ENSBTAP00000002265"/>
<dbReference type="Ensembl" id="ENSBTAT00000002265.4">
    <property type="protein sequence ID" value="ENSBTAP00000002265.3"/>
    <property type="gene ID" value="ENSBTAG00000001729.5"/>
</dbReference>
<dbReference type="GeneID" id="541175"/>
<dbReference type="KEGG" id="bta:541175"/>
<dbReference type="CTD" id="11221"/>
<dbReference type="VEuPathDB" id="HostDB:ENSBTAG00000001729"/>
<dbReference type="VGNC" id="VGNC:28249">
    <property type="gene designation" value="DUSP10"/>
</dbReference>
<dbReference type="eggNOG" id="KOG1716">
    <property type="taxonomic scope" value="Eukaryota"/>
</dbReference>
<dbReference type="GeneTree" id="ENSGT00940000157671"/>
<dbReference type="HOGENOM" id="CLU_027074_0_1_1"/>
<dbReference type="InParanoid" id="Q0IID7"/>
<dbReference type="OMA" id="KKMTKCT"/>
<dbReference type="OrthoDB" id="165342at2759"/>
<dbReference type="TreeFam" id="TF105122"/>
<dbReference type="Reactome" id="R-BTA-112409">
    <property type="pathway name" value="RAF-independent MAPK1/3 activation"/>
</dbReference>
<dbReference type="Reactome" id="R-BTA-5675221">
    <property type="pathway name" value="Negative regulation of MAPK pathway"/>
</dbReference>
<dbReference type="Proteomes" id="UP000009136">
    <property type="component" value="Chromosome 16"/>
</dbReference>
<dbReference type="Bgee" id="ENSBTAG00000001729">
    <property type="expression patterns" value="Expressed in oocyte and 104 other cell types or tissues"/>
</dbReference>
<dbReference type="GO" id="GO:0005737">
    <property type="term" value="C:cytoplasm"/>
    <property type="evidence" value="ECO:0000318"/>
    <property type="project" value="GO_Central"/>
</dbReference>
<dbReference type="GO" id="GO:0005829">
    <property type="term" value="C:cytosol"/>
    <property type="evidence" value="ECO:0000318"/>
    <property type="project" value="GO_Central"/>
</dbReference>
<dbReference type="GO" id="GO:0005654">
    <property type="term" value="C:nucleoplasm"/>
    <property type="evidence" value="ECO:0007669"/>
    <property type="project" value="Ensembl"/>
</dbReference>
<dbReference type="GO" id="GO:0008432">
    <property type="term" value="F:JUN kinase binding"/>
    <property type="evidence" value="ECO:0007669"/>
    <property type="project" value="Ensembl"/>
</dbReference>
<dbReference type="GO" id="GO:0033549">
    <property type="term" value="F:MAP kinase phosphatase activity"/>
    <property type="evidence" value="ECO:0000250"/>
    <property type="project" value="UniProtKB"/>
</dbReference>
<dbReference type="GO" id="GO:0033550">
    <property type="term" value="F:MAP kinase tyrosine phosphatase activity"/>
    <property type="evidence" value="ECO:0000318"/>
    <property type="project" value="GO_Central"/>
</dbReference>
<dbReference type="GO" id="GO:0017017">
    <property type="term" value="F:MAP kinase tyrosine/serine/threonine phosphatase activity"/>
    <property type="evidence" value="ECO:0000318"/>
    <property type="project" value="GO_Central"/>
</dbReference>
<dbReference type="GO" id="GO:0048273">
    <property type="term" value="F:mitogen-activated protein kinase p38 binding"/>
    <property type="evidence" value="ECO:0007669"/>
    <property type="project" value="Ensembl"/>
</dbReference>
<dbReference type="GO" id="GO:0004722">
    <property type="term" value="F:protein serine/threonine phosphatase activity"/>
    <property type="evidence" value="ECO:0007669"/>
    <property type="project" value="UniProtKB-EC"/>
</dbReference>
<dbReference type="GO" id="GO:0008330">
    <property type="term" value="F:protein tyrosine/threonine phosphatase activity"/>
    <property type="evidence" value="ECO:0000318"/>
    <property type="project" value="GO_Central"/>
</dbReference>
<dbReference type="GO" id="GO:0010633">
    <property type="term" value="P:negative regulation of epithelial cell migration"/>
    <property type="evidence" value="ECO:0007669"/>
    <property type="project" value="Ensembl"/>
</dbReference>
<dbReference type="GO" id="GO:0050680">
    <property type="term" value="P:negative regulation of epithelial cell proliferation"/>
    <property type="evidence" value="ECO:0007669"/>
    <property type="project" value="Ensembl"/>
</dbReference>
<dbReference type="GO" id="GO:1905042">
    <property type="term" value="P:negative regulation of epithelium regeneration"/>
    <property type="evidence" value="ECO:0007669"/>
    <property type="project" value="Ensembl"/>
</dbReference>
<dbReference type="GO" id="GO:0070373">
    <property type="term" value="P:negative regulation of ERK1 and ERK2 cascade"/>
    <property type="evidence" value="ECO:0007669"/>
    <property type="project" value="Ensembl"/>
</dbReference>
<dbReference type="GO" id="GO:0046329">
    <property type="term" value="P:negative regulation of JNK cascade"/>
    <property type="evidence" value="ECO:0000318"/>
    <property type="project" value="GO_Central"/>
</dbReference>
<dbReference type="GO" id="GO:1903753">
    <property type="term" value="P:negative regulation of p38MAPK cascade"/>
    <property type="evidence" value="ECO:0007669"/>
    <property type="project" value="Ensembl"/>
</dbReference>
<dbReference type="GO" id="GO:0060266">
    <property type="term" value="P:negative regulation of respiratory burst involved in inflammatory response"/>
    <property type="evidence" value="ECO:0007669"/>
    <property type="project" value="Ensembl"/>
</dbReference>
<dbReference type="GO" id="GO:0032873">
    <property type="term" value="P:negative regulation of stress-activated MAPK cascade"/>
    <property type="evidence" value="ECO:0007669"/>
    <property type="project" value="Ensembl"/>
</dbReference>
<dbReference type="GO" id="GO:0048709">
    <property type="term" value="P:oligodendrocyte differentiation"/>
    <property type="evidence" value="ECO:0007669"/>
    <property type="project" value="Ensembl"/>
</dbReference>
<dbReference type="GO" id="GO:0045591">
    <property type="term" value="P:positive regulation of regulatory T cell differentiation"/>
    <property type="evidence" value="ECO:0007669"/>
    <property type="project" value="Ensembl"/>
</dbReference>
<dbReference type="GO" id="GO:0002819">
    <property type="term" value="P:regulation of adaptive immune response"/>
    <property type="evidence" value="ECO:0007669"/>
    <property type="project" value="Ensembl"/>
</dbReference>
<dbReference type="GO" id="GO:0090335">
    <property type="term" value="P:regulation of brown fat cell differentiation"/>
    <property type="evidence" value="ECO:0007669"/>
    <property type="project" value="Ensembl"/>
</dbReference>
<dbReference type="GO" id="GO:0032496">
    <property type="term" value="P:response to lipopolysaccharide"/>
    <property type="evidence" value="ECO:0007669"/>
    <property type="project" value="Ensembl"/>
</dbReference>
<dbReference type="GO" id="GO:0007165">
    <property type="term" value="P:signal transduction"/>
    <property type="evidence" value="ECO:0000318"/>
    <property type="project" value="GO_Central"/>
</dbReference>
<dbReference type="GO" id="GO:0051403">
    <property type="term" value="P:stress-activated MAPK cascade"/>
    <property type="evidence" value="ECO:0007669"/>
    <property type="project" value="Ensembl"/>
</dbReference>
<dbReference type="CDD" id="cd14567">
    <property type="entry name" value="DSP_DUSP10"/>
    <property type="match status" value="1"/>
</dbReference>
<dbReference type="CDD" id="cd01446">
    <property type="entry name" value="DSP_MapKP"/>
    <property type="match status" value="1"/>
</dbReference>
<dbReference type="FunFam" id="3.90.190.10:FF:000028">
    <property type="entry name" value="Dual specificity phosphatase 10"/>
    <property type="match status" value="1"/>
</dbReference>
<dbReference type="FunFam" id="3.40.250.10:FF:000013">
    <property type="entry name" value="Dual specificity phosphatase 10 (Predicted)"/>
    <property type="match status" value="1"/>
</dbReference>
<dbReference type="Gene3D" id="3.90.190.10">
    <property type="entry name" value="Protein tyrosine phosphatase superfamily"/>
    <property type="match status" value="1"/>
</dbReference>
<dbReference type="Gene3D" id="3.40.250.10">
    <property type="entry name" value="Rhodanese-like domain"/>
    <property type="match status" value="1"/>
</dbReference>
<dbReference type="InterPro" id="IPR000340">
    <property type="entry name" value="Dual-sp_phosphatase_cat-dom"/>
</dbReference>
<dbReference type="InterPro" id="IPR008343">
    <property type="entry name" value="MKP"/>
</dbReference>
<dbReference type="InterPro" id="IPR029021">
    <property type="entry name" value="Prot-tyrosine_phosphatase-like"/>
</dbReference>
<dbReference type="InterPro" id="IPR001763">
    <property type="entry name" value="Rhodanese-like_dom"/>
</dbReference>
<dbReference type="InterPro" id="IPR036873">
    <property type="entry name" value="Rhodanese-like_dom_sf"/>
</dbReference>
<dbReference type="InterPro" id="IPR016130">
    <property type="entry name" value="Tyr_Pase_AS"/>
</dbReference>
<dbReference type="InterPro" id="IPR000387">
    <property type="entry name" value="Tyr_Pase_dom"/>
</dbReference>
<dbReference type="InterPro" id="IPR020422">
    <property type="entry name" value="TYR_PHOSPHATASE_DUAL_dom"/>
</dbReference>
<dbReference type="PANTHER" id="PTHR10159">
    <property type="entry name" value="DUAL SPECIFICITY PROTEIN PHOSPHATASE"/>
    <property type="match status" value="1"/>
</dbReference>
<dbReference type="PANTHER" id="PTHR10159:SF299">
    <property type="entry name" value="DUAL SPECIFICITY PROTEIN PHOSPHATASE 10"/>
    <property type="match status" value="1"/>
</dbReference>
<dbReference type="Pfam" id="PF00782">
    <property type="entry name" value="DSPc"/>
    <property type="match status" value="1"/>
</dbReference>
<dbReference type="Pfam" id="PF00581">
    <property type="entry name" value="Rhodanese"/>
    <property type="match status" value="1"/>
</dbReference>
<dbReference type="PRINTS" id="PR01908">
    <property type="entry name" value="ADSPHPHTASE"/>
</dbReference>
<dbReference type="PRINTS" id="PR01764">
    <property type="entry name" value="MAPKPHPHTASE"/>
</dbReference>
<dbReference type="SMART" id="SM00195">
    <property type="entry name" value="DSPc"/>
    <property type="match status" value="1"/>
</dbReference>
<dbReference type="SMART" id="SM00450">
    <property type="entry name" value="RHOD"/>
    <property type="match status" value="1"/>
</dbReference>
<dbReference type="SUPFAM" id="SSF52799">
    <property type="entry name" value="(Phosphotyrosine protein) phosphatases II"/>
    <property type="match status" value="1"/>
</dbReference>
<dbReference type="SUPFAM" id="SSF52821">
    <property type="entry name" value="Rhodanese/Cell cycle control phosphatase"/>
    <property type="match status" value="1"/>
</dbReference>
<dbReference type="PROSITE" id="PS50206">
    <property type="entry name" value="RHODANESE_3"/>
    <property type="match status" value="1"/>
</dbReference>
<dbReference type="PROSITE" id="PS00383">
    <property type="entry name" value="TYR_PHOSPHATASE_1"/>
    <property type="match status" value="1"/>
</dbReference>
<dbReference type="PROSITE" id="PS50056">
    <property type="entry name" value="TYR_PHOSPHATASE_2"/>
    <property type="match status" value="1"/>
</dbReference>
<dbReference type="PROSITE" id="PS50054">
    <property type="entry name" value="TYR_PHOSPHATASE_DUAL"/>
    <property type="match status" value="1"/>
</dbReference>
<reference key="1">
    <citation type="submission" date="2006-08" db="EMBL/GenBank/DDBJ databases">
        <authorList>
            <consortium name="NIH - Mammalian Gene Collection (MGC) project"/>
        </authorList>
    </citation>
    <scope>NUCLEOTIDE SEQUENCE [LARGE SCALE MRNA]</scope>
    <source>
        <strain>Hereford</strain>
        <tissue>Fetal muscle</tissue>
    </source>
</reference>
<name>DUS10_BOVIN</name>
<sequence>MPPSPLDDRVVVALSRPVRPQDLNLCLDSSYLGSAAPGSTSHPPVIATTVVSLKAANLTYMPSSSGSARSLNCGCSSASCCTVATYDKDNQAPTQAIAAGTATTAIGSSTTCPASQMVNNSENAGSLSPSGGVGSPMAGTPKQLASIKIIYPNDLAKKMTKCSKSHLPSQGPVIIDCRPFMEYNKSHIQGAVHINCADKISRRRLQQGKITVLDLISCREGKDSFKRIFSKEIIVYDENTNEPSRVVPSQPLHIVLESLKREGKEPLVLKGGLSSFKQNHENLCDNSLQLQECREVGGGASAASSMLPQSIPSTPDIENAELTPILPFLFLGNEQDAQDLETMQRLNIGYVINVTTHLPLYHYEKGLFNYKRLPATDSNKQNLRQYFEEAFEFIEEAHQCGKGLLIHCQAGVSRSATIVIAYLMKHTRMTMTDAYKFVKGKRPIISPNLNFMGQLLEFEEDLNNGVTPRILTPKLMGVETVV</sequence>
<accession>Q0IID7</accession>
<feature type="chain" id="PRO_0000283703" description="Dual specificity protein phosphatase 10">
    <location>
        <begin position="1"/>
        <end position="482"/>
    </location>
</feature>
<feature type="domain" description="Rhodanese" evidence="4">
    <location>
        <begin position="168"/>
        <end position="285"/>
    </location>
</feature>
<feature type="domain" description="Tyrosine-protein phosphatase" evidence="3">
    <location>
        <begin position="321"/>
        <end position="464"/>
    </location>
</feature>
<feature type="region of interest" description="Interaction with MAP kinases" evidence="1">
    <location>
        <begin position="199"/>
        <end position="215"/>
    </location>
</feature>
<feature type="active site" description="Phosphocysteine intermediate" evidence="3">
    <location>
        <position position="408"/>
    </location>
</feature>